<comment type="sequence caution" evidence="2">
    <conflict type="erroneous gene model prediction">
        <sequence resource="EMBL-CDS" id="AAC32240"/>
    </conflict>
</comment>
<organism>
    <name type="scientific">Arabidopsis thaliana</name>
    <name type="common">Mouse-ear cress</name>
    <dbReference type="NCBI Taxonomy" id="3702"/>
    <lineage>
        <taxon>Eukaryota</taxon>
        <taxon>Viridiplantae</taxon>
        <taxon>Streptophyta</taxon>
        <taxon>Embryophyta</taxon>
        <taxon>Tracheophyta</taxon>
        <taxon>Spermatophyta</taxon>
        <taxon>Magnoliopsida</taxon>
        <taxon>eudicotyledons</taxon>
        <taxon>Gunneridae</taxon>
        <taxon>Pentapetalae</taxon>
        <taxon>rosids</taxon>
        <taxon>malvids</taxon>
        <taxon>Brassicales</taxon>
        <taxon>Brassicaceae</taxon>
        <taxon>Camelineae</taxon>
        <taxon>Arabidopsis</taxon>
    </lineage>
</organism>
<protein>
    <recommendedName>
        <fullName>F-box protein At2g26850</fullName>
    </recommendedName>
</protein>
<feature type="chain" id="PRO_0000283389" description="F-box protein At2g26850">
    <location>
        <begin position="1"/>
        <end position="371"/>
    </location>
</feature>
<feature type="domain" description="F-box" evidence="1">
    <location>
        <begin position="59"/>
        <end position="105"/>
    </location>
</feature>
<name>FB118_ARATH</name>
<dbReference type="EMBL" id="AC005168">
    <property type="protein sequence ID" value="AAC32240.1"/>
    <property type="status" value="ALT_SEQ"/>
    <property type="molecule type" value="Genomic_DNA"/>
</dbReference>
<dbReference type="EMBL" id="CP002685">
    <property type="protein sequence ID" value="AEC07898.1"/>
    <property type="molecule type" value="Genomic_DNA"/>
</dbReference>
<dbReference type="EMBL" id="BT012221">
    <property type="protein sequence ID" value="AAS76708.1"/>
    <property type="molecule type" value="mRNA"/>
</dbReference>
<dbReference type="EMBL" id="BT012423">
    <property type="protein sequence ID" value="AAS92339.1"/>
    <property type="molecule type" value="mRNA"/>
</dbReference>
<dbReference type="PIR" id="T02650">
    <property type="entry name" value="T02650"/>
</dbReference>
<dbReference type="RefSeq" id="NP_180253.2">
    <property type="nucleotide sequence ID" value="NM_128242.5"/>
</dbReference>
<dbReference type="FunCoup" id="Q6NLB1">
    <property type="interactions" value="300"/>
</dbReference>
<dbReference type="STRING" id="3702.Q6NLB1"/>
<dbReference type="PaxDb" id="3702-AT2G26850.1"/>
<dbReference type="EnsemblPlants" id="AT2G26850.1">
    <property type="protein sequence ID" value="AT2G26850.1"/>
    <property type="gene ID" value="AT2G26850"/>
</dbReference>
<dbReference type="GeneID" id="817226"/>
<dbReference type="Gramene" id="AT2G26850.1">
    <property type="protein sequence ID" value="AT2G26850.1"/>
    <property type="gene ID" value="AT2G26850"/>
</dbReference>
<dbReference type="KEGG" id="ath:AT2G26850"/>
<dbReference type="Araport" id="AT2G26850"/>
<dbReference type="TAIR" id="AT2G26850"/>
<dbReference type="eggNOG" id="ENOG502QQCP">
    <property type="taxonomic scope" value="Eukaryota"/>
</dbReference>
<dbReference type="HOGENOM" id="CLU_035285_0_0_1"/>
<dbReference type="InParanoid" id="Q6NLB1"/>
<dbReference type="OMA" id="DARECGI"/>
<dbReference type="PhylomeDB" id="Q6NLB1"/>
<dbReference type="PRO" id="PR:Q6NLB1"/>
<dbReference type="Proteomes" id="UP000006548">
    <property type="component" value="Chromosome 2"/>
</dbReference>
<dbReference type="ExpressionAtlas" id="Q6NLB1">
    <property type="expression patterns" value="baseline and differential"/>
</dbReference>
<dbReference type="Gene3D" id="1.20.1280.50">
    <property type="match status" value="1"/>
</dbReference>
<dbReference type="InterPro" id="IPR036047">
    <property type="entry name" value="F-box-like_dom_sf"/>
</dbReference>
<dbReference type="InterPro" id="IPR001810">
    <property type="entry name" value="F-box_dom"/>
</dbReference>
<dbReference type="PANTHER" id="PTHR31482">
    <property type="entry name" value="ESTS AU081301(E20138)"/>
    <property type="match status" value="1"/>
</dbReference>
<dbReference type="PANTHER" id="PTHR31482:SF2">
    <property type="entry name" value="F-BOX DOMAIN-CONTAINING PROTEIN"/>
    <property type="match status" value="1"/>
</dbReference>
<dbReference type="Pfam" id="PF00646">
    <property type="entry name" value="F-box"/>
    <property type="match status" value="1"/>
</dbReference>
<dbReference type="SMART" id="SM00256">
    <property type="entry name" value="FBOX"/>
    <property type="match status" value="1"/>
</dbReference>
<dbReference type="SUPFAM" id="SSF81383">
    <property type="entry name" value="F-box domain"/>
    <property type="match status" value="1"/>
</dbReference>
<dbReference type="PROSITE" id="PS50181">
    <property type="entry name" value="FBOX"/>
    <property type="match status" value="1"/>
</dbReference>
<sequence length="371" mass="43407">MLLYLLITCLSFFFFSKSLSFPQWASKTKNLLSFYFSKYLFTNSLHQITPDLASPVLGKMSILDLPDLPLDCILELLPPSELCTMARVCSSLRERCVSDHLWEKHLKTKWGKILGPSAHKEWQCYLSSPYHLDSPHHKTSHLGLAKIISLMRSLSSIFRDDDHRRRYPSSIPLDSTMNFYLSLETGRFWFPAQVYNRENGHVGFMLSCYDAELSYDTDTNTFQARYPPHGKRAIAVEKDVTWERIRAAPVDASPHNLYVSDSLNELKPGDHIEIQWRRNKEFPYGWWYSVVGHMESCDGNLNHCQCHNSEMMVLEFNQYTVGSRWRKTMINRRDHREKGNEEDGFYGGIRKINCKEDIEMWKRLWPSSILE</sequence>
<evidence type="ECO:0000255" key="1">
    <source>
        <dbReference type="PROSITE-ProRule" id="PRU00080"/>
    </source>
</evidence>
<evidence type="ECO:0000305" key="2"/>
<accession>Q6NLB1</accession>
<accession>O81022</accession>
<proteinExistence type="evidence at transcript level"/>
<keyword id="KW-1185">Reference proteome</keyword>
<reference key="1">
    <citation type="journal article" date="1999" name="Nature">
        <title>Sequence and analysis of chromosome 2 of the plant Arabidopsis thaliana.</title>
        <authorList>
            <person name="Lin X."/>
            <person name="Kaul S."/>
            <person name="Rounsley S.D."/>
            <person name="Shea T.P."/>
            <person name="Benito M.-I."/>
            <person name="Town C.D."/>
            <person name="Fujii C.Y."/>
            <person name="Mason T.M."/>
            <person name="Bowman C.L."/>
            <person name="Barnstead M.E."/>
            <person name="Feldblyum T.V."/>
            <person name="Buell C.R."/>
            <person name="Ketchum K.A."/>
            <person name="Lee J.J."/>
            <person name="Ronning C.M."/>
            <person name="Koo H.L."/>
            <person name="Moffat K.S."/>
            <person name="Cronin L.A."/>
            <person name="Shen M."/>
            <person name="Pai G."/>
            <person name="Van Aken S."/>
            <person name="Umayam L."/>
            <person name="Tallon L.J."/>
            <person name="Gill J.E."/>
            <person name="Adams M.D."/>
            <person name="Carrera A.J."/>
            <person name="Creasy T.H."/>
            <person name="Goodman H.M."/>
            <person name="Somerville C.R."/>
            <person name="Copenhaver G.P."/>
            <person name="Preuss D."/>
            <person name="Nierman W.C."/>
            <person name="White O."/>
            <person name="Eisen J.A."/>
            <person name="Salzberg S.L."/>
            <person name="Fraser C.M."/>
            <person name="Venter J.C."/>
        </authorList>
    </citation>
    <scope>NUCLEOTIDE SEQUENCE [LARGE SCALE GENOMIC DNA]</scope>
    <source>
        <strain>cv. Columbia</strain>
    </source>
</reference>
<reference key="2">
    <citation type="journal article" date="2017" name="Plant J.">
        <title>Araport11: a complete reannotation of the Arabidopsis thaliana reference genome.</title>
        <authorList>
            <person name="Cheng C.Y."/>
            <person name="Krishnakumar V."/>
            <person name="Chan A.P."/>
            <person name="Thibaud-Nissen F."/>
            <person name="Schobel S."/>
            <person name="Town C.D."/>
        </authorList>
    </citation>
    <scope>GENOME REANNOTATION</scope>
    <source>
        <strain>cv. Columbia</strain>
    </source>
</reference>
<reference key="3">
    <citation type="submission" date="2004-04" db="EMBL/GenBank/DDBJ databases">
        <title>Arabidopsis ORF clones.</title>
        <authorList>
            <person name="Shinn P."/>
            <person name="Chen H."/>
            <person name="Cheuk R.F."/>
            <person name="Kim C.J."/>
            <person name="Ecker J.R."/>
        </authorList>
    </citation>
    <scope>NUCLEOTIDE SEQUENCE [LARGE SCALE MRNA]</scope>
    <source>
        <strain>cv. Columbia</strain>
    </source>
</reference>
<gene>
    <name type="ordered locus">At2g26850</name>
    <name type="ORF">F12C20.11</name>
</gene>